<name>3SOKA_HEMHA</name>
<organism>
    <name type="scientific">Hemachatus haemachatus</name>
    <name type="common">Rinkhals</name>
    <name type="synonym">Sepedon haemachatus</name>
    <dbReference type="NCBI Taxonomy" id="8626"/>
    <lineage>
        <taxon>Eukaryota</taxon>
        <taxon>Metazoa</taxon>
        <taxon>Chordata</taxon>
        <taxon>Craniata</taxon>
        <taxon>Vertebrata</taxon>
        <taxon>Euteleostomi</taxon>
        <taxon>Lepidosauria</taxon>
        <taxon>Squamata</taxon>
        <taxon>Bifurcata</taxon>
        <taxon>Unidentata</taxon>
        <taxon>Episquamata</taxon>
        <taxon>Toxicofera</taxon>
        <taxon>Serpentes</taxon>
        <taxon>Colubroidea</taxon>
        <taxon>Elapidae</taxon>
        <taxon>Elapinae</taxon>
        <taxon>Hemachatus</taxon>
    </lineage>
</organism>
<accession>P0DQH2</accession>
<dbReference type="SMR" id="P0DQH2"/>
<dbReference type="GO" id="GO:0005576">
    <property type="term" value="C:extracellular region"/>
    <property type="evidence" value="ECO:0007669"/>
    <property type="project" value="UniProtKB-SubCell"/>
</dbReference>
<dbReference type="GO" id="GO:0090729">
    <property type="term" value="F:toxin activity"/>
    <property type="evidence" value="ECO:0007669"/>
    <property type="project" value="UniProtKB-KW"/>
</dbReference>
<dbReference type="CDD" id="cd00206">
    <property type="entry name" value="TFP_snake_toxin"/>
    <property type="match status" value="1"/>
</dbReference>
<dbReference type="Gene3D" id="2.10.60.10">
    <property type="entry name" value="CD59"/>
    <property type="match status" value="1"/>
</dbReference>
<dbReference type="InterPro" id="IPR003571">
    <property type="entry name" value="Snake_3FTx"/>
</dbReference>
<dbReference type="InterPro" id="IPR045860">
    <property type="entry name" value="Snake_toxin-like_sf"/>
</dbReference>
<dbReference type="InterPro" id="IPR054131">
    <property type="entry name" value="Toxin_cobra-type"/>
</dbReference>
<dbReference type="Pfam" id="PF21947">
    <property type="entry name" value="Toxin_cobra-type"/>
    <property type="match status" value="1"/>
</dbReference>
<dbReference type="SUPFAM" id="SSF57302">
    <property type="entry name" value="Snake toxin-like"/>
    <property type="match status" value="1"/>
</dbReference>
<feature type="chain" id="PRO_0000447299" description="Exactin" evidence="2">
    <location>
        <begin position="1"/>
        <end position="57"/>
    </location>
</feature>
<feature type="disulfide bond" evidence="1">
    <location>
        <begin position="3"/>
        <end position="19"/>
    </location>
</feature>
<feature type="disulfide bond" evidence="1">
    <location>
        <begin position="12"/>
        <end position="37"/>
    </location>
</feature>
<feature type="disulfide bond" evidence="1">
    <location>
        <begin position="41"/>
        <end position="49"/>
    </location>
</feature>
<feature type="disulfide bond" evidence="1">
    <location>
        <begin position="50"/>
        <end position="55"/>
    </location>
</feature>
<comment type="function">
    <text evidence="2">Anticoagulant protein that prevents the activation of factor X (F10). It acts by potently inhibiting the extrinsic tenase complex (ETC) (IC(50)=116.49 nM), a complex composed by active factor VII (F7a), tissue factor (TF) and F10. In addition, it shows weaker activities on other complexes. It weakly inhibits F10 activation by inhibiting the intrinsic tenase complex (IC(50)=4.05 uM), a complex composed by active factor IX (IXa, F9a), its cofactor factor VIII (VIIIa, F8a), and their substrate F10. It also weakly prevents prothrombin activation by inhibiting the prothrombinase complex (IC(50)=17.66 uM). It shows high kinetic constant towards F7a/TF/F10/phospholipids complex (Ki=30.62 nM) and lower kinetic constant towards F7a/TF/phospholipids complex (Ki=153.75 nM).</text>
</comment>
<comment type="subcellular location">
    <subcellularLocation>
        <location evidence="2">Secreted</location>
    </subcellularLocation>
</comment>
<comment type="tissue specificity">
    <text evidence="5">Expressed by the venom gland.</text>
</comment>
<comment type="mass spectrometry"/>
<comment type="miscellaneous">
    <text evidence="2">Negative results: does not show activity on procoagulant, anticoagulant and fibrinolytic serine proteases such as FVIIa, FXa, FIXa, FXIa, FXIIa, alpha-thrombin, kallikrein, activated protein C (APC), plasmin, urokinase, and tissue plasminogen activator (PubMed:27558950). Does not induce hemolysis (PubMed:27558950).</text>
</comment>
<comment type="miscellaneous">
    <text evidence="4">Is classified as a P-type cytotoxin, since a proline residue stands at position 28 (Pro-31 in standard classification).</text>
</comment>
<comment type="similarity">
    <text evidence="4">Belongs to the three-finger toxin family. Short-chain subfamily. Orphan group XX sub-subfamily.</text>
</comment>
<evidence type="ECO:0000250" key="1">
    <source>
        <dbReference type="UniProtKB" id="P60301"/>
    </source>
</evidence>
<evidence type="ECO:0000269" key="2">
    <source>
    </source>
</evidence>
<evidence type="ECO:0000303" key="3">
    <source>
    </source>
</evidence>
<evidence type="ECO:0000305" key="4"/>
<evidence type="ECO:0000305" key="5">
    <source>
    </source>
</evidence>
<protein>
    <recommendedName>
        <fullName evidence="3">Exactin</fullName>
    </recommendedName>
    <alternativeName>
        <fullName evidence="3">Extrinsic tenase-mediated FX activation inhibitor</fullName>
    </alternativeName>
</protein>
<reference key="1">
    <citation type="journal article" date="2016" name="Sci. Rep.">
        <title>Exactin: a specific inhibitor of Factor X activation by extrinsic tenase complex from the venom of Hemachatus haemachatus.</title>
        <authorList>
            <person name="Girish V.M."/>
            <person name="Kini R.M."/>
        </authorList>
    </citation>
    <scope>PROTEIN SEQUENCE</scope>
    <scope>SUBCELLULAR LOCATION</scope>
    <scope>FUNCTION</scope>
    <scope>MASS SPECTROMETRY</scope>
    <source>
        <tissue>Venom</tissue>
    </source>
</reference>
<sequence>LECYQKSKVVTCQPEQKFCYSDTTMFFPNHPVYLSGCTFSCTEEGNRRCCTTDKCNR</sequence>
<keyword id="KW-1203">Blood coagulation cascade inhibiting toxin</keyword>
<keyword id="KW-0903">Direct protein sequencing</keyword>
<keyword id="KW-1015">Disulfide bond</keyword>
<keyword id="KW-1199">Hemostasis impairing toxin</keyword>
<keyword id="KW-0964">Secreted</keyword>
<keyword id="KW-0800">Toxin</keyword>
<proteinExistence type="evidence at protein level"/>